<proteinExistence type="evidence at transcript level"/>
<feature type="chain" id="PRO_0000309322" description="Cyclin-Y-like protein 1">
    <location>
        <begin position="1"/>
        <end position="339"/>
    </location>
</feature>
<feature type="domain" description="Cyclin N-terminal">
    <location>
        <begin position="181"/>
        <end position="263"/>
    </location>
</feature>
<organism>
    <name type="scientific">Danio rerio</name>
    <name type="common">Zebrafish</name>
    <name type="synonym">Brachydanio rerio</name>
    <dbReference type="NCBI Taxonomy" id="7955"/>
    <lineage>
        <taxon>Eukaryota</taxon>
        <taxon>Metazoa</taxon>
        <taxon>Chordata</taxon>
        <taxon>Craniata</taxon>
        <taxon>Vertebrata</taxon>
        <taxon>Euteleostomi</taxon>
        <taxon>Actinopterygii</taxon>
        <taxon>Neopterygii</taxon>
        <taxon>Teleostei</taxon>
        <taxon>Ostariophysi</taxon>
        <taxon>Cypriniformes</taxon>
        <taxon>Danionidae</taxon>
        <taxon>Danioninae</taxon>
        <taxon>Danio</taxon>
    </lineage>
</organism>
<accession>Q08CI4</accession>
<gene>
    <name type="primary">ccnyl1</name>
    <name type="ORF">zgc:153047</name>
</gene>
<reference key="1">
    <citation type="submission" date="2006-09" db="EMBL/GenBank/DDBJ databases">
        <authorList>
            <consortium name="NIH - Zebrafish Gene Collection (ZGC) project"/>
        </authorList>
    </citation>
    <scope>NUCLEOTIDE SEQUENCE [LARGE SCALE MRNA]</scope>
    <source>
        <tissue>Testis</tissue>
    </source>
</reference>
<evidence type="ECO:0000250" key="1">
    <source>
        <dbReference type="UniProtKB" id="D3YUJ3"/>
    </source>
</evidence>
<evidence type="ECO:0000250" key="2">
    <source>
        <dbReference type="UniProtKB" id="Q8N7R7"/>
    </source>
</evidence>
<evidence type="ECO:0000305" key="3"/>
<protein>
    <recommendedName>
        <fullName>Cyclin-Y-like protein 1</fullName>
    </recommendedName>
</protein>
<comment type="function">
    <text evidence="1">Key regulator of Wnt signaling implicated in various biological processes such as embryonic neurogenesis.</text>
</comment>
<comment type="subcellular location">
    <subcellularLocation>
        <location evidence="2">Cell membrane</location>
    </subcellularLocation>
</comment>
<comment type="similarity">
    <text evidence="3">Belongs to the cyclin family. Cyclin Y subfamily.</text>
</comment>
<name>CCYL1_DANRE</name>
<keyword id="KW-1003">Cell membrane</keyword>
<keyword id="KW-0195">Cyclin</keyword>
<keyword id="KW-0472">Membrane</keyword>
<keyword id="KW-0524">Neurogenesis</keyword>
<keyword id="KW-1185">Reference proteome</keyword>
<dbReference type="EMBL" id="BC124226">
    <property type="protein sequence ID" value="AAI24227.1"/>
    <property type="molecule type" value="mRNA"/>
</dbReference>
<dbReference type="RefSeq" id="NP_001070188.1">
    <property type="nucleotide sequence ID" value="NM_001076720.1"/>
</dbReference>
<dbReference type="SMR" id="Q08CI4"/>
<dbReference type="FunCoup" id="Q08CI4">
    <property type="interactions" value="1880"/>
</dbReference>
<dbReference type="STRING" id="7955.ENSDARP00000135349"/>
<dbReference type="PaxDb" id="7955-ENSDARP00000084282"/>
<dbReference type="Ensembl" id="ENSDART00000160387">
    <property type="protein sequence ID" value="ENSDARP00000135349"/>
    <property type="gene ID" value="ENSDARG00000099692"/>
</dbReference>
<dbReference type="GeneID" id="767752"/>
<dbReference type="KEGG" id="dre:767752"/>
<dbReference type="AGR" id="ZFIN:ZDB-GENE-060929-732"/>
<dbReference type="CTD" id="151195"/>
<dbReference type="ZFIN" id="ZDB-GENE-060929-732">
    <property type="gene designation" value="ccnyl1"/>
</dbReference>
<dbReference type="eggNOG" id="KOG1675">
    <property type="taxonomic scope" value="Eukaryota"/>
</dbReference>
<dbReference type="HOGENOM" id="CLU_055026_0_0_1"/>
<dbReference type="InParanoid" id="Q08CI4"/>
<dbReference type="OMA" id="RWADAYQ"/>
<dbReference type="OrthoDB" id="10250320at2759"/>
<dbReference type="PhylomeDB" id="Q08CI4"/>
<dbReference type="TreeFam" id="TF314464"/>
<dbReference type="PRO" id="PR:Q08CI4"/>
<dbReference type="Proteomes" id="UP000000437">
    <property type="component" value="Chromosome 9"/>
</dbReference>
<dbReference type="Bgee" id="ENSDARG00000099692">
    <property type="expression patterns" value="Expressed in mature ovarian follicle and 27 other cell types or tissues"/>
</dbReference>
<dbReference type="GO" id="GO:0005886">
    <property type="term" value="C:plasma membrane"/>
    <property type="evidence" value="ECO:0000250"/>
    <property type="project" value="UniProtKB"/>
</dbReference>
<dbReference type="GO" id="GO:0019901">
    <property type="term" value="F:protein kinase binding"/>
    <property type="evidence" value="ECO:0007669"/>
    <property type="project" value="InterPro"/>
</dbReference>
<dbReference type="GO" id="GO:0007399">
    <property type="term" value="P:nervous system development"/>
    <property type="evidence" value="ECO:0007669"/>
    <property type="project" value="UniProtKB-KW"/>
</dbReference>
<dbReference type="GO" id="GO:0060828">
    <property type="term" value="P:regulation of canonical Wnt signaling pathway"/>
    <property type="evidence" value="ECO:0000318"/>
    <property type="project" value="GO_Central"/>
</dbReference>
<dbReference type="CDD" id="cd20540">
    <property type="entry name" value="CYCLIN_CCNY_like"/>
    <property type="match status" value="1"/>
</dbReference>
<dbReference type="FunFam" id="1.10.472.10:FF:000011">
    <property type="entry name" value="Cyclin-Y isoform 1"/>
    <property type="match status" value="1"/>
</dbReference>
<dbReference type="Gene3D" id="1.10.472.10">
    <property type="entry name" value="Cyclin-like"/>
    <property type="match status" value="1"/>
</dbReference>
<dbReference type="InterPro" id="IPR013763">
    <property type="entry name" value="Cyclin-like_dom"/>
</dbReference>
<dbReference type="InterPro" id="IPR036915">
    <property type="entry name" value="Cyclin-like_sf"/>
</dbReference>
<dbReference type="InterPro" id="IPR006671">
    <property type="entry name" value="Cyclin_N"/>
</dbReference>
<dbReference type="InterPro" id="IPR012399">
    <property type="entry name" value="Cyclin_Y"/>
</dbReference>
<dbReference type="PANTHER" id="PTHR14248">
    <property type="entry name" value="CYCLIN Y, ISOFORM A"/>
    <property type="match status" value="1"/>
</dbReference>
<dbReference type="Pfam" id="PF00134">
    <property type="entry name" value="Cyclin_N"/>
    <property type="match status" value="1"/>
</dbReference>
<dbReference type="PIRSF" id="PIRSF028934">
    <property type="entry name" value="Cyclin_CG14939"/>
    <property type="match status" value="1"/>
</dbReference>
<dbReference type="SMART" id="SM00385">
    <property type="entry name" value="CYCLIN"/>
    <property type="match status" value="1"/>
</dbReference>
<dbReference type="SUPFAM" id="SSF47954">
    <property type="entry name" value="Cyclin-like"/>
    <property type="match status" value="1"/>
</dbReference>
<sequence length="339" mass="38784">MGNTVSCCVSPSGSPKLPRQVERLEDYQNNTDISDDTGPYLQHISDREVPDDLALESNPSDHARASTIFLSKSQTDVRDRRKSNHINHVSPGLLSKKYSSCSTIFIDDSTVSQPNLKSTIKCVTLAIYYHIKNRDSDRSLDIFDEKMHPLSREQVPDDYSRTDPEHKLIYRFVRTLFSAAQLTAECAIVTLVYLERLLTYAELDICPSNWKRIVLGAILLASKVWDDQAVWNVDYCQILKDITVEDMNEMERHFLELLQFNINVPASVYAKYYFDLRSLADDNNLSFPLEPLSNERAQKLEAISRLCEDKYKDLSRVAMRRSFSADNLVGIRRSNAVLS</sequence>